<name>TF3C1_HUMAN</name>
<comment type="function">
    <text>Required for RNA polymerase III-mediated transcription. Component of TFIIIC that initiates transcription complex assembly on tRNA and is required for transcription of 5S rRNA and other stable nuclear and cytoplasmic RNAs. Binds to the box B promoter element.</text>
</comment>
<comment type="subunit">
    <text evidence="3 4">Part of the TFIIIC subcomplex TFIIIC2, consisting of six subunits, GTF3C1, GTF3C2, GTF3C3, GTF3C4, GTF3C5 and GTF3C6 (PubMed:19299493). Interacts with IGHMBP2. Interacts with MAF1 (PubMed:18377933).</text>
</comment>
<comment type="interaction">
    <interactant intactId="EBI-357956">
        <id>Q12789</id>
    </interactant>
    <interactant intactId="EBI-741181">
        <id>Q6RW13</id>
        <label>AGTRAP</label>
    </interactant>
    <organismsDiffer>false</organismsDiffer>
    <experiments>3</experiments>
</comment>
<comment type="interaction">
    <interactant intactId="EBI-357956">
        <id>Q12789</id>
    </interactant>
    <interactant intactId="EBI-2548702">
        <id>Q96DZ9</id>
        <label>CMTM5</label>
    </interactant>
    <organismsDiffer>false</organismsDiffer>
    <experiments>3</experiments>
</comment>
<comment type="interaction">
    <interactant intactId="EBI-357956">
        <id>Q12789</id>
    </interactant>
    <interactant intactId="EBI-1237062">
        <id>Q8WUA4</id>
        <label>GTF3C2</label>
    </interactant>
    <organismsDiffer>false</organismsDiffer>
    <experiments>3</experiments>
</comment>
<comment type="interaction">
    <interactant intactId="EBI-357956">
        <id>Q12789</id>
    </interactant>
    <interactant intactId="EBI-10194128">
        <id>Q1RN33</id>
        <label>MAGEA4</label>
    </interactant>
    <organismsDiffer>false</organismsDiffer>
    <experiments>3</experiments>
</comment>
<comment type="subcellular location">
    <subcellularLocation>
        <location>Nucleus</location>
    </subcellularLocation>
</comment>
<comment type="alternative products">
    <event type="alternative splicing"/>
    <isoform>
        <id>Q12789-2</id>
        <name>1</name>
        <sequence type="displayed"/>
    </isoform>
    <isoform>
        <id>Q12789-3</id>
        <name>2</name>
        <sequence type="described" ref="VSP_021819"/>
    </isoform>
</comment>
<comment type="similarity">
    <text evidence="6">Belongs to the TFIIIC subunit 1 family.</text>
</comment>
<comment type="sequence caution" evidence="6">
    <conflict type="frameshift">
        <sequence resource="EMBL-CDS" id="AAA17985"/>
    </conflict>
</comment>
<comment type="sequence caution" evidence="6">
    <conflict type="miscellaneous discrepancy">
        <sequence resource="EMBL-CDS" id="AAA85638"/>
    </conflict>
    <text>Contaminating sequence. Potential vector sequence at the N-terminus.</text>
</comment>
<sequence>MDALESLLDEVALEGLDGLCLPALWSRLETRVPPFPLPLEPCTQEFLWRALATHPGISFYEEPRERPDLQLQDRYEEIDLETGILESRRDPVALEDVYPIHMILENKDGIQGSCRYFKERKNITNDIRTKSLQPRCTMVEAFDRWGKKLIIVASQAMRYRALIGQEGDPDLKLPDFSYCILERLGRSRWQGELQRDLHTTAFKVDAGKLHYHRKILNKNGLITMQSHVIRLPTGAQQHSILLLLNRFHVDRRSKYDILMEKLSVMLSTRTNHIETLGKLREELGLCERTFKRLYQYMLNAGLAKVVSLRLQEIHPECGPCKTKKGTDVMVRCLKLLKEFKRNDHDDDEDEEVISKTVPPVDIVFERDMLTQTYDLIERRGTKGISQAEIRVAMNVGKLEARMLCRLLQRFKVVKGFMEDEGRQRTTKYISCVFAEESDLSRQYQREKARSELLTTVSLASMQEESLLPEGEDTFLSESDSEEERSSSKRRGRGSQKDTRASANLRPKTQPHHSTPTKGGWKVVNLHPLKKQPPSFPGAAEERACQSLASRDSLLDTSSVSEPNVSFVSHCADSNSGDIAVIEEVRMENPKESSSSLKTGRHSSGQDKPHETYRLLKRRNLIIEAVTNLRLIESLFTIQKMIMDQEKQEGVSTKCCKKSIVRLVRNLSEEGLLRLYRTTVIQDGIKKKVDLVVHPSMDQNDPLVRSAIEQVRFRISNSSTANRVKTSQPPVPQGEAEEDSQGKEGPSGSGDSQLSASSRSESGRMKKSDNKMGITPLRNYHPIVVPGLGRSLGFLPKMPRLRVVHMFLWYLIYGHPASNTVEKPSFISERRTIKQESGRAGVRPSSSGSAWEACSEAPSKGSQDGVTWEAEVELATETVYVDDASWMRYIPPIPVHRDFGFGWALVSDILLCLPLSIFIQIVQVSYKVDNLEEFLNDPLKKHTLIRFLPRPIRQQLLYKRRYIFSVVENLQRLCYMGLLQFGPTEKFQDKDQVFIFLKKNAVIVDTTICDPHYNLARSSRPFERRLYVLNSMQDVENYWFDLQCVCLNTPLGVVRCPRVRKNSSTDQGSDEEGSLQKEQESAMDKHNLERKCAMLEYTTGSREVVDEGLIPGDGLGAAGLDSSFYGHLKRNWIWTSYIINQAKKENTAAENGLTVRLQTFLSKRPMPLSARGNSRLNIWGEARVGSELCAGWEEQFEVDREPSLDRNRRVRGGKSQKRKRLKKDPGKKIKRKKKGEFPGEKSKRLRYHDEADQSALQRMTRLRVTWSMQEDGLLVLCRIASNVLNTKVKGPFVTWQVVRDILHATFEESLDKTSHSVGRRARYIVKNPQAYLNYKVCLAEVYQDKALVGDFMNRRGDYDDPKVCANEFKEFVEKLKEKFSSALRNSNLEIPDTLQELFARYRVLAIGDEKDQTRKEDELNSVDDIHFLVLQNLIQSTLALSDSQMKSYQSFQTFRLYREYKDHVLVKAFMECQKRSLVNRRRVNHTLGPKKNRALPFVPMSYQLSQTYYRIFTWRFPSTICTESFQFLDRMRAAGKLDQPDRFSFKDQDNNEPTNDMVAFSLDGPGGNCVAVLTLFSLGLISVDVRIPEQIIVVDSSMVENEVIKSLGKDGSLEDDEDEEDDLDEGVGGKRRSMEVKPAQASHTNYLLMRGYYSPGIVSTRNLNPNDSIVVNSCQMKFQLRCTPVPARLRPAAAPLEELTMGTSCLPDTFTKLINPQENTCSLEEFVLQLELSGYSPEDLTAALEILEAIIATGCFGIDKEELRRRFSALEKAGGGRTRTFADCIQALLEQHQVLEVGGNTARLVAMGSAWPWLLHSVRLKDREDADIQREDPQARPLEGSSSEDSPPEGQAPPSHSPRGTKRRASWASENGETDAEGTQMTPAKRPALQDSNLAPSLGPGAEDGAEAQAPSPPPALEDTAAAGAAQEDQEGVGEFSSPGQEQLSGQAQPPEGSEDPRGFTESFGAANISQAARERDCESVCFIGRPWRVVDGHLNLPVCKGMMEAMLYHIMTRPGIPESSLLRHYQGVLQPVAVLELLQGLESLGCIRKRWLRKPRPVSLFSTPVVEEVEVPSSLDESPMAFYEPTLDCTLRLGRVFPHEVNWNKWIHL</sequence>
<evidence type="ECO:0000250" key="1">
    <source>
        <dbReference type="UniProtKB" id="Q8K284"/>
    </source>
</evidence>
<evidence type="ECO:0000256" key="2">
    <source>
        <dbReference type="SAM" id="MobiDB-lite"/>
    </source>
</evidence>
<evidence type="ECO:0000269" key="3">
    <source>
    </source>
</evidence>
<evidence type="ECO:0000269" key="4">
    <source>
    </source>
</evidence>
<evidence type="ECO:0000303" key="5">
    <source>
    </source>
</evidence>
<evidence type="ECO:0000305" key="6"/>
<evidence type="ECO:0007744" key="7">
    <source>
    </source>
</evidence>
<evidence type="ECO:0007744" key="8">
    <source>
    </source>
</evidence>
<evidence type="ECO:0007744" key="9">
    <source>
    </source>
</evidence>
<evidence type="ECO:0007744" key="10">
    <source>
    </source>
</evidence>
<evidence type="ECO:0007744" key="11">
    <source>
    </source>
</evidence>
<evidence type="ECO:0007744" key="12">
    <source>
    </source>
</evidence>
<evidence type="ECO:0007744" key="13">
    <source>
    </source>
</evidence>
<evidence type="ECO:0007744" key="14">
    <source>
    </source>
</evidence>
<evidence type="ECO:0007744" key="15">
    <source>
    </source>
</evidence>
<evidence type="ECO:0007744" key="16">
    <source>
    </source>
</evidence>
<evidence type="ECO:0007744" key="17">
    <source>
    </source>
</evidence>
<evidence type="ECO:0007829" key="18">
    <source>
        <dbReference type="PDB" id="8CLI"/>
    </source>
</evidence>
<evidence type="ECO:0007829" key="19">
    <source>
        <dbReference type="PDB" id="8CLL"/>
    </source>
</evidence>
<reference key="1">
    <citation type="journal article" date="1994" name="Proc. Natl. Acad. Sci. U.S.A.">
        <title>Human transcription factor IIIC box B binding subunit.</title>
        <authorList>
            <person name="L'Etoile N.D."/>
            <person name="Fahnestock M.L."/>
            <person name="Shen Y."/>
            <person name="Aebersold R."/>
            <person name="Berk A.J."/>
        </authorList>
    </citation>
    <scope>NUCLEOTIDE SEQUENCE [MRNA] (ISOFORM 1)</scope>
    <scope>PROTEIN SEQUENCE OF 1103-1121</scope>
</reference>
<reference key="2">
    <citation type="journal article" date="1999" name="Genomics">
        <title>Genome duplications and other features in 12 Mb of DNA sequence from human chromosome 16p and 16q.</title>
        <authorList>
            <person name="Loftus B.J."/>
            <person name="Kim U.-J."/>
            <person name="Sneddon V.P."/>
            <person name="Kalush F."/>
            <person name="Brandon R."/>
            <person name="Fuhrmann J."/>
            <person name="Mason T."/>
            <person name="Crosby M.L."/>
            <person name="Barnstead M."/>
            <person name="Cronin L."/>
            <person name="Mays A.D."/>
            <person name="Cao Y."/>
            <person name="Xu R.X."/>
            <person name="Kang H.-L."/>
            <person name="Mitchell S."/>
            <person name="Eichler E.E."/>
            <person name="Harris P.C."/>
            <person name="Venter J.C."/>
            <person name="Adams M.D."/>
        </authorList>
    </citation>
    <scope>NUCLEOTIDE SEQUENCE [LARGE SCALE GENOMIC DNA]</scope>
</reference>
<reference key="3">
    <citation type="journal article" date="2004" name="Nature">
        <title>The sequence and analysis of duplication-rich human chromosome 16.</title>
        <authorList>
            <person name="Martin J."/>
            <person name="Han C."/>
            <person name="Gordon L.A."/>
            <person name="Terry A."/>
            <person name="Prabhakar S."/>
            <person name="She X."/>
            <person name="Xie G."/>
            <person name="Hellsten U."/>
            <person name="Chan Y.M."/>
            <person name="Altherr M."/>
            <person name="Couronne O."/>
            <person name="Aerts A."/>
            <person name="Bajorek E."/>
            <person name="Black S."/>
            <person name="Blumer H."/>
            <person name="Branscomb E."/>
            <person name="Brown N.C."/>
            <person name="Bruno W.J."/>
            <person name="Buckingham J.M."/>
            <person name="Callen D.F."/>
            <person name="Campbell C.S."/>
            <person name="Campbell M.L."/>
            <person name="Campbell E.W."/>
            <person name="Caoile C."/>
            <person name="Challacombe J.F."/>
            <person name="Chasteen L.A."/>
            <person name="Chertkov O."/>
            <person name="Chi H.C."/>
            <person name="Christensen M."/>
            <person name="Clark L.M."/>
            <person name="Cohn J.D."/>
            <person name="Denys M."/>
            <person name="Detter J.C."/>
            <person name="Dickson M."/>
            <person name="Dimitrijevic-Bussod M."/>
            <person name="Escobar J."/>
            <person name="Fawcett J.J."/>
            <person name="Flowers D."/>
            <person name="Fotopulos D."/>
            <person name="Glavina T."/>
            <person name="Gomez M."/>
            <person name="Gonzales E."/>
            <person name="Goodstein D."/>
            <person name="Goodwin L.A."/>
            <person name="Grady D.L."/>
            <person name="Grigoriev I."/>
            <person name="Groza M."/>
            <person name="Hammon N."/>
            <person name="Hawkins T."/>
            <person name="Haydu L."/>
            <person name="Hildebrand C.E."/>
            <person name="Huang W."/>
            <person name="Israni S."/>
            <person name="Jett J."/>
            <person name="Jewett P.B."/>
            <person name="Kadner K."/>
            <person name="Kimball H."/>
            <person name="Kobayashi A."/>
            <person name="Krawczyk M.-C."/>
            <person name="Leyba T."/>
            <person name="Longmire J.L."/>
            <person name="Lopez F."/>
            <person name="Lou Y."/>
            <person name="Lowry S."/>
            <person name="Ludeman T."/>
            <person name="Manohar C.F."/>
            <person name="Mark G.A."/>
            <person name="McMurray K.L."/>
            <person name="Meincke L.J."/>
            <person name="Morgan J."/>
            <person name="Moyzis R.K."/>
            <person name="Mundt M.O."/>
            <person name="Munk A.C."/>
            <person name="Nandkeshwar R.D."/>
            <person name="Pitluck S."/>
            <person name="Pollard M."/>
            <person name="Predki P."/>
            <person name="Parson-Quintana B."/>
            <person name="Ramirez L."/>
            <person name="Rash S."/>
            <person name="Retterer J."/>
            <person name="Ricke D.O."/>
            <person name="Robinson D.L."/>
            <person name="Rodriguez A."/>
            <person name="Salamov A."/>
            <person name="Saunders E.H."/>
            <person name="Scott D."/>
            <person name="Shough T."/>
            <person name="Stallings R.L."/>
            <person name="Stalvey M."/>
            <person name="Sutherland R.D."/>
            <person name="Tapia R."/>
            <person name="Tesmer J.G."/>
            <person name="Thayer N."/>
            <person name="Thompson L.S."/>
            <person name="Tice H."/>
            <person name="Torney D.C."/>
            <person name="Tran-Gyamfi M."/>
            <person name="Tsai M."/>
            <person name="Ulanovsky L.E."/>
            <person name="Ustaszewska A."/>
            <person name="Vo N."/>
            <person name="White P.S."/>
            <person name="Williams A.L."/>
            <person name="Wills P.L."/>
            <person name="Wu J.-R."/>
            <person name="Wu K."/>
            <person name="Yang J."/>
            <person name="DeJong P."/>
            <person name="Bruce D."/>
            <person name="Doggett N.A."/>
            <person name="Deaven L."/>
            <person name="Schmutz J."/>
            <person name="Grimwood J."/>
            <person name="Richardson P."/>
            <person name="Rokhsar D.S."/>
            <person name="Eichler E.E."/>
            <person name="Gilna P."/>
            <person name="Lucas S.M."/>
            <person name="Myers R.M."/>
            <person name="Rubin E.M."/>
            <person name="Pennacchio L.A."/>
        </authorList>
    </citation>
    <scope>NUCLEOTIDE SEQUENCE [LARGE SCALE GENOMIC DNA]</scope>
</reference>
<reference key="4">
    <citation type="journal article" date="2004" name="Genome Res.">
        <title>The status, quality, and expansion of the NIH full-length cDNA project: the Mammalian Gene Collection (MGC).</title>
        <authorList>
            <consortium name="The MGC Project Team"/>
        </authorList>
    </citation>
    <scope>NUCLEOTIDE SEQUENCE [LARGE SCALE MRNA] (ISOFORM 1)</scope>
    <scope>NUCLEOTIDE SEQUENCE [LARGE SCALE MRNA] OF 1107-2109 (ISOFORM 2)</scope>
    <source>
        <tissue>Brain</tissue>
        <tissue>Cervix</tissue>
    </source>
</reference>
<reference key="5">
    <citation type="journal article" date="1994" name="Mol. Cell. Biol.">
        <title>Cloning and characterization of an evolutionarily divergent DNA-binding subunit of mammalian TFIIIC.</title>
        <authorList>
            <person name="Lagna G."/>
            <person name="Kovelman R."/>
            <person name="Sukegawa J."/>
            <person name="Roeder R.G."/>
        </authorList>
    </citation>
    <scope>NUCLEOTIDE SEQUENCE [MRNA] OF 71-728 (ISOFORM 1)</scope>
</reference>
<reference key="6">
    <citation type="journal article" date="2006" name="Cell">
        <title>Global, in vivo, and site-specific phosphorylation dynamics in signaling networks.</title>
        <authorList>
            <person name="Olsen J.V."/>
            <person name="Blagoev B."/>
            <person name="Gnad F."/>
            <person name="Macek B."/>
            <person name="Kumar C."/>
            <person name="Mortensen P."/>
            <person name="Mann M."/>
        </authorList>
    </citation>
    <scope>PHOSPHORYLATION [LARGE SCALE ANALYSIS] AT SER-1068</scope>
    <scope>IDENTIFICATION BY MASS SPECTROMETRY [LARGE SCALE ANALYSIS]</scope>
    <source>
        <tissue>Cervix carcinoma</tissue>
    </source>
</reference>
<reference key="7">
    <citation type="journal article" date="2006" name="Nat. Biotechnol.">
        <title>A probability-based approach for high-throughput protein phosphorylation analysis and site localization.</title>
        <authorList>
            <person name="Beausoleil S.A."/>
            <person name="Villen J."/>
            <person name="Gerber S.A."/>
            <person name="Rush J."/>
            <person name="Gygi S.P."/>
        </authorList>
    </citation>
    <scope>PHOSPHORYLATION [LARGE SCALE ANALYSIS] AT SER-1653</scope>
    <scope>IDENTIFICATION BY MASS SPECTROMETRY [LARGE SCALE ANALYSIS]</scope>
    <source>
        <tissue>Cervix carcinoma</tissue>
    </source>
</reference>
<reference key="8">
    <citation type="journal article" date="2007" name="Science">
        <title>ATM and ATR substrate analysis reveals extensive protein networks responsive to DNA damage.</title>
        <authorList>
            <person name="Matsuoka S."/>
            <person name="Ballif B.A."/>
            <person name="Smogorzewska A."/>
            <person name="McDonald E.R. III"/>
            <person name="Hurov K.E."/>
            <person name="Luo J."/>
            <person name="Bakalarski C.E."/>
            <person name="Zhao Z."/>
            <person name="Solimini N."/>
            <person name="Lerenthal Y."/>
            <person name="Shiloh Y."/>
            <person name="Gygi S.P."/>
            <person name="Elledge S.J."/>
        </authorList>
    </citation>
    <scope>PHOSPHORYLATION [LARGE SCALE ANALYSIS] AT SER-1969</scope>
    <scope>IDENTIFICATION BY MASS SPECTROMETRY [LARGE SCALE ANALYSIS]</scope>
    <source>
        <tissue>Embryonic kidney</tissue>
    </source>
</reference>
<reference key="9">
    <citation type="journal article" date="2008" name="J. Proteome Res.">
        <title>Combining protein-based IMAC, peptide-based IMAC, and MudPIT for efficient phosphoproteomic analysis.</title>
        <authorList>
            <person name="Cantin G.T."/>
            <person name="Yi W."/>
            <person name="Lu B."/>
            <person name="Park S.K."/>
            <person name="Xu T."/>
            <person name="Lee J.-D."/>
            <person name="Yates J.R. III"/>
        </authorList>
    </citation>
    <scope>IDENTIFICATION BY MASS SPECTROMETRY [LARGE SCALE ANALYSIS]</scope>
    <source>
        <tissue>Cervix carcinoma</tissue>
    </source>
</reference>
<reference key="10">
    <citation type="journal article" date="2008" name="Proc. Natl. Acad. Sci. U.S.A.">
        <title>A quantitative atlas of mitotic phosphorylation.</title>
        <authorList>
            <person name="Dephoure N."/>
            <person name="Zhou C."/>
            <person name="Villen J."/>
            <person name="Beausoleil S.A."/>
            <person name="Bakalarski C.E."/>
            <person name="Elledge S.J."/>
            <person name="Gygi S.P."/>
        </authorList>
    </citation>
    <scope>PHOSPHORYLATION [LARGE SCALE ANALYSIS] AT SER-739; SER-1062; SER-1632; SER-1653; SER-1856; SER-1865 AND SER-1868</scope>
    <scope>IDENTIFICATION BY MASS SPECTROMETRY [LARGE SCALE ANALYSIS]</scope>
    <source>
        <tissue>Cervix carcinoma</tissue>
    </source>
</reference>
<reference key="11">
    <citation type="journal article" date="2008" name="J. Mol. Biol.">
        <title>Regulation of RNA polymerase III transcription by Maf1 in mammalian cells.</title>
        <authorList>
            <person name="Goodfellow S.J."/>
            <person name="Graham E.L."/>
            <person name="Kantidakis T."/>
            <person name="Marshall L."/>
            <person name="Coppins B.A."/>
            <person name="Oficjalska-Pham D."/>
            <person name="Gerard M."/>
            <person name="Lefebvre O."/>
            <person name="White R.J."/>
        </authorList>
    </citation>
    <scope>INTERACTION WITH MAF1</scope>
</reference>
<reference key="12">
    <citation type="journal article" date="2009" name="Anal. Chem.">
        <title>Lys-N and trypsin cover complementary parts of the phosphoproteome in a refined SCX-based approach.</title>
        <authorList>
            <person name="Gauci S."/>
            <person name="Helbig A.O."/>
            <person name="Slijper M."/>
            <person name="Krijgsveld J."/>
            <person name="Heck A.J."/>
            <person name="Mohammed S."/>
        </authorList>
    </citation>
    <scope>IDENTIFICATION BY MASS SPECTROMETRY [LARGE SCALE ANALYSIS]</scope>
</reference>
<reference key="13">
    <citation type="journal article" date="2009" name="Hum. Mol. Genet.">
        <title>Biochemical and genetic evidence for a role of IGHMBP2 in the translational machinery.</title>
        <authorList>
            <person name="de Planell-Saguer M."/>
            <person name="Schroeder D.G."/>
            <person name="Rodicio M.C."/>
            <person name="Cox G.A."/>
            <person name="Mourelatos Z."/>
        </authorList>
    </citation>
    <scope>INTERACTION WITH IGHMBP2</scope>
</reference>
<reference key="14">
    <citation type="journal article" date="2009" name="Sci. Signal.">
        <title>Quantitative phosphoproteomic analysis of T cell receptor signaling reveals system-wide modulation of protein-protein interactions.</title>
        <authorList>
            <person name="Mayya V."/>
            <person name="Lundgren D.H."/>
            <person name="Hwang S.-I."/>
            <person name="Rezaul K."/>
            <person name="Wu L."/>
            <person name="Eng J.K."/>
            <person name="Rodionov V."/>
            <person name="Han D.K."/>
        </authorList>
    </citation>
    <scope>PHOSPHORYLATION [LARGE SCALE ANALYSIS] AT SER-1068; SER-1865 AND SER-1868</scope>
    <scope>IDENTIFICATION BY MASS SPECTROMETRY [LARGE SCALE ANALYSIS]</scope>
    <source>
        <tissue>Leukemic T-cell</tissue>
    </source>
</reference>
<reference key="15">
    <citation type="journal article" date="2010" name="Sci. Signal.">
        <title>Quantitative phosphoproteomics reveals widespread full phosphorylation site occupancy during mitosis.</title>
        <authorList>
            <person name="Olsen J.V."/>
            <person name="Vermeulen M."/>
            <person name="Santamaria A."/>
            <person name="Kumar C."/>
            <person name="Miller M.L."/>
            <person name="Jensen L.J."/>
            <person name="Gnad F."/>
            <person name="Cox J."/>
            <person name="Jensen T.S."/>
            <person name="Nigg E.A."/>
            <person name="Brunak S."/>
            <person name="Mann M."/>
        </authorList>
    </citation>
    <scope>PHOSPHORYLATION [LARGE SCALE ANALYSIS] AT SER-1062; SER-1068; SER-1632; SER-1653; SER-1865 AND SER-1868</scope>
    <scope>IDENTIFICATION BY MASS SPECTROMETRY [LARGE SCALE ANALYSIS]</scope>
    <source>
        <tissue>Cervix carcinoma</tissue>
    </source>
</reference>
<reference key="16">
    <citation type="journal article" date="2011" name="BMC Syst. Biol.">
        <title>Initial characterization of the human central proteome.</title>
        <authorList>
            <person name="Burkard T.R."/>
            <person name="Planyavsky M."/>
            <person name="Kaupe I."/>
            <person name="Breitwieser F.P."/>
            <person name="Buerckstuemmer T."/>
            <person name="Bennett K.L."/>
            <person name="Superti-Furga G."/>
            <person name="Colinge J."/>
        </authorList>
    </citation>
    <scope>IDENTIFICATION BY MASS SPECTROMETRY [LARGE SCALE ANALYSIS]</scope>
</reference>
<reference key="17">
    <citation type="journal article" date="2011" name="Sci. Signal.">
        <title>System-wide temporal characterization of the proteome and phosphoproteome of human embryonic stem cell differentiation.</title>
        <authorList>
            <person name="Rigbolt K.T."/>
            <person name="Prokhorova T.A."/>
            <person name="Akimov V."/>
            <person name="Henningsen J."/>
            <person name="Johansen P.T."/>
            <person name="Kratchmarova I."/>
            <person name="Kassem M."/>
            <person name="Mann M."/>
            <person name="Olsen J.V."/>
            <person name="Blagoev B."/>
        </authorList>
    </citation>
    <scope>PHOSPHORYLATION [LARGE SCALE ANALYSIS] AT SER-667; SER-739; SER-1062 AND SER-1068</scope>
    <scope>IDENTIFICATION BY MASS SPECTROMETRY [LARGE SCALE ANALYSIS]</scope>
</reference>
<reference key="18">
    <citation type="journal article" date="2013" name="J. Proteome Res.">
        <title>Toward a comprehensive characterization of a human cancer cell phosphoproteome.</title>
        <authorList>
            <person name="Zhou H."/>
            <person name="Di Palma S."/>
            <person name="Preisinger C."/>
            <person name="Peng M."/>
            <person name="Polat A.N."/>
            <person name="Heck A.J."/>
            <person name="Mohammed S."/>
        </authorList>
    </citation>
    <scope>PHOSPHORYLATION [LARGE SCALE ANALYSIS] AT SER-739; SER-1068; SER-1253; SER-1611; SER-1632; SER-1653; SER-1865 AND SER-1868</scope>
    <scope>IDENTIFICATION BY MASS SPECTROMETRY [LARGE SCALE ANALYSIS]</scope>
    <source>
        <tissue>Cervix carcinoma</tissue>
        <tissue>Erythroleukemia</tissue>
    </source>
</reference>
<reference key="19">
    <citation type="journal article" date="2014" name="J. Proteomics">
        <title>An enzyme assisted RP-RPLC approach for in-depth analysis of human liver phosphoproteome.</title>
        <authorList>
            <person name="Bian Y."/>
            <person name="Song C."/>
            <person name="Cheng K."/>
            <person name="Dong M."/>
            <person name="Wang F."/>
            <person name="Huang J."/>
            <person name="Sun D."/>
            <person name="Wang L."/>
            <person name="Ye M."/>
            <person name="Zou H."/>
        </authorList>
    </citation>
    <scope>PHOSPHORYLATION [LARGE SCALE ANALYSIS] AT SER-1911</scope>
    <scope>IDENTIFICATION BY MASS SPECTROMETRY [LARGE SCALE ANALYSIS]</scope>
    <source>
        <tissue>Liver</tissue>
    </source>
</reference>
<reference key="20">
    <citation type="journal article" date="2015" name="Mol. Cell. Proteomics">
        <title>System-wide analysis of SUMOylation dynamics in response to replication stress reveals novel small ubiquitin-like modified target proteins and acceptor lysines relevant for genome stability.</title>
        <authorList>
            <person name="Xiao Z."/>
            <person name="Chang J.G."/>
            <person name="Hendriks I.A."/>
            <person name="Sigurdsson J.O."/>
            <person name="Olsen J.V."/>
            <person name="Vertegaal A.C."/>
        </authorList>
    </citation>
    <scope>SUMOYLATION [LARGE SCALE ANALYSIS] AT LYS-833 AND LYS-1142</scope>
    <scope>IDENTIFICATION BY MASS SPECTROMETRY [LARGE SCALE ANALYSIS]</scope>
</reference>
<reference key="21">
    <citation type="journal article" date="2017" name="Nat. Struct. Mol. Biol.">
        <title>Site-specific mapping of the human SUMO proteome reveals co-modification with phosphorylation.</title>
        <authorList>
            <person name="Hendriks I.A."/>
            <person name="Lyon D."/>
            <person name="Young C."/>
            <person name="Jensen L.J."/>
            <person name="Vertegaal A.C."/>
            <person name="Nielsen M.L."/>
        </authorList>
    </citation>
    <scope>SUMOYLATION [LARGE SCALE ANALYSIS] AT LYS-529; LYS-770; LYS-833 AND LYS-1142</scope>
    <scope>IDENTIFICATION BY MASS SPECTROMETRY [LARGE SCALE ANALYSIS]</scope>
</reference>
<protein>
    <recommendedName>
        <fullName>General transcription factor 3C polypeptide 1</fullName>
    </recommendedName>
    <alternativeName>
        <fullName>TF3C-alpha</fullName>
    </alternativeName>
    <alternativeName>
        <fullName>TFIIIC box B-binding subunit</fullName>
    </alternativeName>
    <alternativeName>
        <fullName>Transcription factor IIIC 220 kDa subunit</fullName>
        <shortName>TFIIIC 220 kDa subunit</shortName>
        <shortName>TFIIIC220</shortName>
    </alternativeName>
    <alternativeName>
        <fullName>Transcription factor IIIC subunit alpha</fullName>
    </alternativeName>
</protein>
<feature type="chain" id="PRO_0000209710" description="General transcription factor 3C polypeptide 1">
    <location>
        <begin position="1"/>
        <end position="2109"/>
    </location>
</feature>
<feature type="region of interest" description="Disordered" evidence="2">
    <location>
        <begin position="467"/>
        <end position="521"/>
    </location>
</feature>
<feature type="region of interest" description="Disordered" evidence="2">
    <location>
        <begin position="586"/>
        <end position="609"/>
    </location>
</feature>
<feature type="region of interest" description="Disordered" evidence="2">
    <location>
        <begin position="718"/>
        <end position="775"/>
    </location>
</feature>
<feature type="region of interest" description="Disordered" evidence="2">
    <location>
        <begin position="836"/>
        <end position="857"/>
    </location>
</feature>
<feature type="region of interest" description="Disordered" evidence="2">
    <location>
        <begin position="1059"/>
        <end position="1082"/>
    </location>
</feature>
<feature type="region of interest" description="Disordered" evidence="2">
    <location>
        <begin position="1202"/>
        <end position="1241"/>
    </location>
</feature>
<feature type="region of interest" description="Disordered" evidence="2">
    <location>
        <begin position="1608"/>
        <end position="1631"/>
    </location>
</feature>
<feature type="region of interest" description="Disordered" evidence="2">
    <location>
        <begin position="1823"/>
        <end position="1961"/>
    </location>
</feature>
<feature type="compositionally biased region" description="Acidic residues" evidence="2">
    <location>
        <begin position="469"/>
        <end position="482"/>
    </location>
</feature>
<feature type="compositionally biased region" description="Polar residues" evidence="2">
    <location>
        <begin position="718"/>
        <end position="727"/>
    </location>
</feature>
<feature type="compositionally biased region" description="Low complexity" evidence="2">
    <location>
        <begin position="748"/>
        <end position="759"/>
    </location>
</feature>
<feature type="compositionally biased region" description="Basic and acidic residues" evidence="2">
    <location>
        <begin position="760"/>
        <end position="769"/>
    </location>
</feature>
<feature type="compositionally biased region" description="Basic and acidic residues" evidence="2">
    <location>
        <begin position="1073"/>
        <end position="1082"/>
    </location>
</feature>
<feature type="compositionally biased region" description="Basic residues" evidence="2">
    <location>
        <begin position="1207"/>
        <end position="1221"/>
    </location>
</feature>
<feature type="compositionally biased region" description="Acidic residues" evidence="2">
    <location>
        <begin position="1612"/>
        <end position="1624"/>
    </location>
</feature>
<feature type="compositionally biased region" description="Basic and acidic residues" evidence="2">
    <location>
        <begin position="1823"/>
        <end position="1833"/>
    </location>
</feature>
<feature type="compositionally biased region" description="Low complexity" evidence="2">
    <location>
        <begin position="1838"/>
        <end position="1848"/>
    </location>
</feature>
<feature type="compositionally biased region" description="Low complexity" evidence="2">
    <location>
        <begin position="1916"/>
        <end position="1926"/>
    </location>
</feature>
<feature type="compositionally biased region" description="Polar residues" evidence="2">
    <location>
        <begin position="1937"/>
        <end position="1947"/>
    </location>
</feature>
<feature type="modified residue" description="Phosphoserine" evidence="13">
    <location>
        <position position="667"/>
    </location>
</feature>
<feature type="modified residue" description="Phosphoserine" evidence="10 13 14">
    <location>
        <position position="739"/>
    </location>
</feature>
<feature type="modified residue" description="Phosphoserine" evidence="10 12 13">
    <location>
        <position position="1062"/>
    </location>
</feature>
<feature type="modified residue" description="Phosphoserine" evidence="8 11 12 13 14">
    <location>
        <position position="1068"/>
    </location>
</feature>
<feature type="modified residue" description="Phosphoserine" evidence="14">
    <location>
        <position position="1253"/>
    </location>
</feature>
<feature type="modified residue" description="Phosphoserine" evidence="14">
    <location>
        <position position="1611"/>
    </location>
</feature>
<feature type="modified residue" description="Phosphoserine" evidence="10 12 14">
    <location>
        <position position="1632"/>
    </location>
</feature>
<feature type="modified residue" description="Phosphoserine" evidence="7 10 12 14">
    <location>
        <position position="1653"/>
    </location>
</feature>
<feature type="modified residue" description="Phosphoserine" evidence="10">
    <location>
        <position position="1856"/>
    </location>
</feature>
<feature type="modified residue" description="Phosphoserine" evidence="10 11 12 14">
    <location>
        <position position="1865"/>
    </location>
</feature>
<feature type="modified residue" description="Phosphoserine" evidence="10 11 12 14">
    <location>
        <position position="1868"/>
    </location>
</feature>
<feature type="modified residue" description="Phosphoserine" evidence="1">
    <location>
        <position position="1896"/>
    </location>
</feature>
<feature type="modified residue" description="Phosphoserine" evidence="15">
    <location>
        <position position="1911"/>
    </location>
</feature>
<feature type="modified residue" description="Phosphoserine" evidence="9">
    <location>
        <position position="1969"/>
    </location>
</feature>
<feature type="cross-link" description="Glycyl lysine isopeptide (Lys-Gly) (interchain with G-Cter in SUMO2)" evidence="17">
    <location>
        <position position="529"/>
    </location>
</feature>
<feature type="cross-link" description="Glycyl lysine isopeptide (Lys-Gly) (interchain with G-Cter in SUMO2)" evidence="17">
    <location>
        <position position="770"/>
    </location>
</feature>
<feature type="cross-link" description="Glycyl lysine isopeptide (Lys-Gly) (interchain with G-Cter in SUMO2)" evidence="16 17">
    <location>
        <position position="833"/>
    </location>
</feature>
<feature type="cross-link" description="Glycyl lysine isopeptide (Lys-Gly) (interchain with G-Cter in SUMO2)" evidence="16 17">
    <location>
        <position position="1142"/>
    </location>
</feature>
<feature type="splice variant" id="VSP_021819" description="In isoform 2." evidence="5">
    <location>
        <begin position="1933"/>
        <end position="1957"/>
    </location>
</feature>
<feature type="sequence variant" id="VAR_047534" description="In dbSNP:rs35233306.">
    <original>Q</original>
    <variation>E</variation>
    <location>
        <position position="1889"/>
    </location>
</feature>
<feature type="sequence variant" id="VAR_047535" description="In dbSNP:rs12919017.">
    <original>F</original>
    <variation>S</variation>
    <location>
        <position position="1959"/>
    </location>
</feature>
<feature type="sequence variant" id="VAR_047536" description="In dbSNP:rs2228248.">
    <original>E</original>
    <variation>K</variation>
    <location>
        <position position="2077"/>
    </location>
</feature>
<feature type="sequence conflict" description="In Ref. 1; AAA17985." evidence="6" ref="1">
    <original>A</original>
    <variation>P</variation>
    <location>
        <position position="141"/>
    </location>
</feature>
<feature type="sequence conflict" description="In Ref. 1; AAA17985." evidence="6" ref="1">
    <original>A</original>
    <variation>P</variation>
    <location>
        <position position="153"/>
    </location>
</feature>
<feature type="sequence conflict" description="In Ref. 1; AAA17985." evidence="6" ref="1">
    <original>A</original>
    <variation>P</variation>
    <location>
        <position position="156"/>
    </location>
</feature>
<feature type="sequence conflict" description="In Ref. 1; AAA17985." evidence="6" ref="1">
    <original>A</original>
    <variation>P</variation>
    <location>
        <position position="161"/>
    </location>
</feature>
<feature type="sequence conflict" description="In Ref. 1; AAA17985." evidence="6" ref="1">
    <original>G</original>
    <variation>A</variation>
    <location>
        <position position="164"/>
    </location>
</feature>
<feature type="sequence conflict" description="In Ref. 1; AAA17985." evidence="6" ref="1">
    <original>L</original>
    <variation>V</variation>
    <location>
        <position position="977"/>
    </location>
</feature>
<feature type="sequence conflict" description="In Ref. 1; AAA17985." evidence="6" ref="1">
    <original>ARSS</original>
    <variation>GRRR</variation>
    <location>
        <begin position="1015"/>
        <end position="1018"/>
    </location>
</feature>
<feature type="sequence conflict" description="In Ref. 1; AAA17985." evidence="6" ref="1">
    <original>Q</original>
    <variation>H</variation>
    <location>
        <position position="1256"/>
    </location>
</feature>
<feature type="sequence conflict" description="In Ref. 1; AAA17985." evidence="6" ref="1">
    <original>V</original>
    <variation>L</variation>
    <location>
        <position position="1316"/>
    </location>
</feature>
<feature type="helix" evidence="18">
    <location>
        <begin position="3"/>
        <end position="13"/>
    </location>
</feature>
<feature type="helix" evidence="18">
    <location>
        <begin position="21"/>
        <end position="29"/>
    </location>
</feature>
<feature type="helix" evidence="18">
    <location>
        <begin position="41"/>
        <end position="52"/>
    </location>
</feature>
<feature type="strand" evidence="18">
    <location>
        <begin position="57"/>
        <end position="61"/>
    </location>
</feature>
<feature type="strand" evidence="18">
    <location>
        <begin position="80"/>
        <end position="83"/>
    </location>
</feature>
<feature type="turn" evidence="18">
    <location>
        <begin position="115"/>
        <end position="119"/>
    </location>
</feature>
<feature type="helix" evidence="18">
    <location>
        <begin position="124"/>
        <end position="127"/>
    </location>
</feature>
<feature type="strand" evidence="19">
    <location>
        <begin position="134"/>
        <end position="136"/>
    </location>
</feature>
<feature type="helix" evidence="18">
    <location>
        <begin position="138"/>
        <end position="145"/>
    </location>
</feature>
<feature type="helix" evidence="18">
    <location>
        <begin position="146"/>
        <end position="148"/>
    </location>
</feature>
<feature type="strand" evidence="18">
    <location>
        <begin position="149"/>
        <end position="153"/>
    </location>
</feature>
<feature type="helix" evidence="18">
    <location>
        <begin position="155"/>
        <end position="163"/>
    </location>
</feature>
<feature type="turn" evidence="18">
    <location>
        <begin position="164"/>
        <end position="166"/>
    </location>
</feature>
<feature type="helix" evidence="18">
    <location>
        <begin position="175"/>
        <end position="185"/>
    </location>
</feature>
<feature type="turn" evidence="18">
    <location>
        <begin position="186"/>
        <end position="189"/>
    </location>
</feature>
<feature type="helix" evidence="18">
    <location>
        <begin position="194"/>
        <end position="199"/>
    </location>
</feature>
<feature type="helix" evidence="18">
    <location>
        <begin position="206"/>
        <end position="218"/>
    </location>
</feature>
<feature type="strand" evidence="18">
    <location>
        <begin position="222"/>
        <end position="230"/>
    </location>
</feature>
<feature type="strand" evidence="18">
    <location>
        <begin position="236"/>
        <end position="244"/>
    </location>
</feature>
<feature type="helix" evidence="18">
    <location>
        <begin position="245"/>
        <end position="247"/>
    </location>
</feature>
<feature type="helix" evidence="18">
    <location>
        <begin position="254"/>
        <end position="268"/>
    </location>
</feature>
<feature type="strand" evidence="18">
    <location>
        <begin position="272"/>
        <end position="275"/>
    </location>
</feature>
<feature type="helix" evidence="18">
    <location>
        <begin position="276"/>
        <end position="281"/>
    </location>
</feature>
<feature type="turn" evidence="18">
    <location>
        <begin position="282"/>
        <end position="284"/>
    </location>
</feature>
<feature type="helix" evidence="18">
    <location>
        <begin position="287"/>
        <end position="299"/>
    </location>
</feature>
<feature type="strand" evidence="18">
    <location>
        <begin position="302"/>
        <end position="309"/>
    </location>
</feature>
<feature type="helix" evidence="18">
    <location>
        <begin position="310"/>
        <end position="313"/>
    </location>
</feature>
<feature type="strand" evidence="18">
    <location>
        <begin position="329"/>
        <end position="335"/>
    </location>
</feature>
<feature type="helix" evidence="18">
    <location>
        <begin position="368"/>
        <end position="379"/>
    </location>
</feature>
<feature type="helix" evidence="18">
    <location>
        <begin position="380"/>
        <end position="382"/>
    </location>
</feature>
<feature type="helix" evidence="18">
    <location>
        <begin position="386"/>
        <end position="393"/>
    </location>
</feature>
<feature type="helix" evidence="18">
    <location>
        <begin position="397"/>
        <end position="409"/>
    </location>
</feature>
<feature type="strand" evidence="18">
    <location>
        <begin position="412"/>
        <end position="420"/>
    </location>
</feature>
<feature type="strand" evidence="18">
    <location>
        <begin position="423"/>
        <end position="430"/>
    </location>
</feature>
<feature type="helix" evidence="18">
    <location>
        <begin position="431"/>
        <end position="434"/>
    </location>
</feature>
<feature type="helix" evidence="18">
    <location>
        <begin position="438"/>
        <end position="455"/>
    </location>
</feature>
<feature type="helix" evidence="18">
    <location>
        <begin position="612"/>
        <end position="627"/>
    </location>
</feature>
<feature type="strand" evidence="18">
    <location>
        <begin position="628"/>
        <end position="631"/>
    </location>
</feature>
<feature type="helix" evidence="18">
    <location>
        <begin position="634"/>
        <end position="648"/>
    </location>
</feature>
<feature type="helix" evidence="18">
    <location>
        <begin position="656"/>
        <end position="668"/>
    </location>
</feature>
<feature type="strand" evidence="18">
    <location>
        <begin position="673"/>
        <end position="676"/>
    </location>
</feature>
<feature type="strand" evidence="18">
    <location>
        <begin position="678"/>
        <end position="681"/>
    </location>
</feature>
<feature type="strand" evidence="18">
    <location>
        <begin position="684"/>
        <end position="687"/>
    </location>
</feature>
<feature type="strand" evidence="18">
    <location>
        <begin position="690"/>
        <end position="692"/>
    </location>
</feature>
<feature type="helix" evidence="18">
    <location>
        <begin position="701"/>
        <end position="714"/>
    </location>
</feature>
<dbReference type="EMBL" id="U02619">
    <property type="protein sequence ID" value="AAA17985.1"/>
    <property type="status" value="ALT_FRAME"/>
    <property type="molecule type" value="mRNA"/>
</dbReference>
<dbReference type="EMBL" id="AC002303">
    <property type="protein sequence ID" value="AAB67637.1"/>
    <property type="molecule type" value="Genomic_DNA"/>
</dbReference>
<dbReference type="EMBL" id="AC025275">
    <property type="status" value="NOT_ANNOTATED_CDS"/>
    <property type="molecule type" value="Genomic_DNA"/>
</dbReference>
<dbReference type="EMBL" id="AC002551">
    <property type="protein sequence ID" value="AAC05811.1"/>
    <property type="molecule type" value="Genomic_DNA"/>
</dbReference>
<dbReference type="EMBL" id="BC044857">
    <property type="protein sequence ID" value="AAH44857.1"/>
    <property type="molecule type" value="mRNA"/>
</dbReference>
<dbReference type="EMBL" id="BC137229">
    <property type="protein sequence ID" value="AAI37230.1"/>
    <property type="molecule type" value="mRNA"/>
</dbReference>
<dbReference type="EMBL" id="U06485">
    <property type="protein sequence ID" value="AAA85638.1"/>
    <property type="status" value="ALT_SEQ"/>
    <property type="molecule type" value="mRNA"/>
</dbReference>
<dbReference type="CCDS" id="CCDS32414.1">
    <molecule id="Q12789-2"/>
</dbReference>
<dbReference type="CCDS" id="CCDS66988.1">
    <molecule id="Q12789-3"/>
</dbReference>
<dbReference type="PIR" id="B56011">
    <property type="entry name" value="B56011"/>
</dbReference>
<dbReference type="PIR" id="I38414">
    <property type="entry name" value="I38414"/>
</dbReference>
<dbReference type="RefSeq" id="NP_001273171.1">
    <molecule id="Q12789-3"/>
    <property type="nucleotide sequence ID" value="NM_001286242.2"/>
</dbReference>
<dbReference type="RefSeq" id="NP_001511.2">
    <molecule id="Q12789-2"/>
    <property type="nucleotide sequence ID" value="NM_001520.4"/>
</dbReference>
<dbReference type="PDB" id="8CLI">
    <property type="method" value="EM"/>
    <property type="resolution" value="3.20 A"/>
    <property type="chains" value="A=1-2109"/>
</dbReference>
<dbReference type="PDB" id="8CLJ">
    <property type="method" value="EM"/>
    <property type="resolution" value="3.20 A"/>
    <property type="chains" value="A/F=1-2109"/>
</dbReference>
<dbReference type="PDB" id="8CLK">
    <property type="method" value="EM"/>
    <property type="resolution" value="3.50 A"/>
    <property type="chains" value="A=1-2109"/>
</dbReference>
<dbReference type="PDB" id="8CLL">
    <property type="method" value="EM"/>
    <property type="resolution" value="3.40 A"/>
    <property type="chains" value="A/F=1-2109"/>
</dbReference>
<dbReference type="PDBsum" id="8CLI"/>
<dbReference type="PDBsum" id="8CLJ"/>
<dbReference type="PDBsum" id="8CLK"/>
<dbReference type="PDBsum" id="8CLL"/>
<dbReference type="EMDB" id="EMD-16713"/>
<dbReference type="EMDB" id="EMD-16714"/>
<dbReference type="EMDB" id="EMD-16715"/>
<dbReference type="EMDB" id="EMD-16717"/>
<dbReference type="SMR" id="Q12789"/>
<dbReference type="BioGRID" id="109230">
    <property type="interactions" value="278"/>
</dbReference>
<dbReference type="ComplexPortal" id="CPX-2373">
    <property type="entry name" value="General transcription factor TFIIIC complex"/>
</dbReference>
<dbReference type="CORUM" id="Q12789"/>
<dbReference type="DIP" id="DIP-38212N"/>
<dbReference type="FunCoup" id="Q12789">
    <property type="interactions" value="2643"/>
</dbReference>
<dbReference type="IntAct" id="Q12789">
    <property type="interactions" value="149"/>
</dbReference>
<dbReference type="MINT" id="Q12789"/>
<dbReference type="STRING" id="9606.ENSP00000348510"/>
<dbReference type="GlyCosmos" id="Q12789">
    <property type="glycosylation" value="1 site, 1 glycan"/>
</dbReference>
<dbReference type="GlyGen" id="Q12789">
    <property type="glycosylation" value="8 sites, 3 N-linked glycans (4 sites), 1 O-linked glycan (4 sites)"/>
</dbReference>
<dbReference type="iPTMnet" id="Q12789"/>
<dbReference type="MetOSite" id="Q12789"/>
<dbReference type="PhosphoSitePlus" id="Q12789"/>
<dbReference type="SwissPalm" id="Q12789"/>
<dbReference type="BioMuta" id="GTF3C1"/>
<dbReference type="DMDM" id="215274233"/>
<dbReference type="jPOST" id="Q12789"/>
<dbReference type="MassIVE" id="Q12789"/>
<dbReference type="PaxDb" id="9606-ENSP00000348510"/>
<dbReference type="PeptideAtlas" id="Q12789"/>
<dbReference type="ProteomicsDB" id="58924">
    <molecule id="Q12789-2"/>
</dbReference>
<dbReference type="ProteomicsDB" id="58925">
    <molecule id="Q12789-3"/>
</dbReference>
<dbReference type="Pumba" id="Q12789"/>
<dbReference type="Antibodypedia" id="26269">
    <property type="antibodies" value="42 antibodies from 11 providers"/>
</dbReference>
<dbReference type="DNASU" id="2975"/>
<dbReference type="Ensembl" id="ENST00000356183.9">
    <molecule id="Q12789-2"/>
    <property type="protein sequence ID" value="ENSP00000348510.4"/>
    <property type="gene ID" value="ENSG00000077235.18"/>
</dbReference>
<dbReference type="Ensembl" id="ENST00000561623.5">
    <molecule id="Q12789-3"/>
    <property type="protein sequence ID" value="ENSP00000455417.1"/>
    <property type="gene ID" value="ENSG00000077235.18"/>
</dbReference>
<dbReference type="GeneID" id="2975"/>
<dbReference type="KEGG" id="hsa:2975"/>
<dbReference type="MANE-Select" id="ENST00000356183.9">
    <property type="protein sequence ID" value="ENSP00000348510.4"/>
    <property type="RefSeq nucleotide sequence ID" value="NM_001520.4"/>
    <property type="RefSeq protein sequence ID" value="NP_001511.2"/>
</dbReference>
<dbReference type="UCSC" id="uc002dou.4">
    <molecule id="Q12789-2"/>
    <property type="organism name" value="human"/>
</dbReference>
<dbReference type="AGR" id="HGNC:4664"/>
<dbReference type="CTD" id="2975"/>
<dbReference type="DisGeNET" id="2975"/>
<dbReference type="GeneCards" id="GTF3C1"/>
<dbReference type="HGNC" id="HGNC:4664">
    <property type="gene designation" value="GTF3C1"/>
</dbReference>
<dbReference type="HPA" id="ENSG00000077235">
    <property type="expression patterns" value="Low tissue specificity"/>
</dbReference>
<dbReference type="MIM" id="603246">
    <property type="type" value="gene"/>
</dbReference>
<dbReference type="neXtProt" id="NX_Q12789"/>
<dbReference type="OpenTargets" id="ENSG00000077235"/>
<dbReference type="PharmGKB" id="PA29052"/>
<dbReference type="VEuPathDB" id="HostDB:ENSG00000077235"/>
<dbReference type="eggNOG" id="KOG4560">
    <property type="taxonomic scope" value="Eukaryota"/>
</dbReference>
<dbReference type="GeneTree" id="ENSGT00390000008664"/>
<dbReference type="HOGENOM" id="CLU_001556_1_0_1"/>
<dbReference type="InParanoid" id="Q12789"/>
<dbReference type="OMA" id="TIIQDGI"/>
<dbReference type="OrthoDB" id="68020at2759"/>
<dbReference type="PAN-GO" id="Q12789">
    <property type="GO annotations" value="3 GO annotations based on evolutionary models"/>
</dbReference>
<dbReference type="PhylomeDB" id="Q12789"/>
<dbReference type="TreeFam" id="TF351624"/>
<dbReference type="PathwayCommons" id="Q12789"/>
<dbReference type="Reactome" id="R-HSA-749476">
    <property type="pathway name" value="RNA Polymerase III Abortive And Retractive Initiation"/>
</dbReference>
<dbReference type="Reactome" id="R-HSA-76061">
    <property type="pathway name" value="RNA Polymerase III Transcription Initiation From Type 1 Promoter"/>
</dbReference>
<dbReference type="Reactome" id="R-HSA-76066">
    <property type="pathway name" value="RNA Polymerase III Transcription Initiation From Type 2 Promoter"/>
</dbReference>
<dbReference type="SignaLink" id="Q12789"/>
<dbReference type="SIGNOR" id="Q12789"/>
<dbReference type="BioGRID-ORCS" id="2975">
    <property type="hits" value="686 hits in 1148 CRISPR screens"/>
</dbReference>
<dbReference type="ChiTaRS" id="GTF3C1">
    <property type="organism name" value="human"/>
</dbReference>
<dbReference type="GeneWiki" id="GTF3C1"/>
<dbReference type="GenomeRNAi" id="2975"/>
<dbReference type="Pharos" id="Q12789">
    <property type="development level" value="Tbio"/>
</dbReference>
<dbReference type="PRO" id="PR:Q12789"/>
<dbReference type="Proteomes" id="UP000005640">
    <property type="component" value="Chromosome 16"/>
</dbReference>
<dbReference type="RNAct" id="Q12789">
    <property type="molecule type" value="protein"/>
</dbReference>
<dbReference type="Bgee" id="ENSG00000077235">
    <property type="expression patterns" value="Expressed in lower esophagus mucosa and 205 other cell types or tissues"/>
</dbReference>
<dbReference type="ExpressionAtlas" id="Q12789">
    <property type="expression patterns" value="baseline and differential"/>
</dbReference>
<dbReference type="GO" id="GO:0016020">
    <property type="term" value="C:membrane"/>
    <property type="evidence" value="ECO:0007005"/>
    <property type="project" value="UniProtKB"/>
</dbReference>
<dbReference type="GO" id="GO:0005730">
    <property type="term" value="C:nucleolus"/>
    <property type="evidence" value="ECO:0000314"/>
    <property type="project" value="HPA"/>
</dbReference>
<dbReference type="GO" id="GO:0005654">
    <property type="term" value="C:nucleoplasm"/>
    <property type="evidence" value="ECO:0000314"/>
    <property type="project" value="HPA"/>
</dbReference>
<dbReference type="GO" id="GO:1990904">
    <property type="term" value="C:ribonucleoprotein complex"/>
    <property type="evidence" value="ECO:0007669"/>
    <property type="project" value="Ensembl"/>
</dbReference>
<dbReference type="GO" id="GO:0000127">
    <property type="term" value="C:transcription factor TFIIIC complex"/>
    <property type="evidence" value="ECO:0000314"/>
    <property type="project" value="HGNC-UCL"/>
</dbReference>
<dbReference type="GO" id="GO:0003677">
    <property type="term" value="F:DNA binding"/>
    <property type="evidence" value="ECO:0007669"/>
    <property type="project" value="UniProtKB-KW"/>
</dbReference>
<dbReference type="GO" id="GO:0000995">
    <property type="term" value="F:RNA polymerase III general transcription initiation factor activity"/>
    <property type="evidence" value="ECO:0000314"/>
    <property type="project" value="GO_Central"/>
</dbReference>
<dbReference type="GO" id="GO:0042791">
    <property type="term" value="P:5S class rRNA transcription by RNA polymerase III"/>
    <property type="evidence" value="ECO:0000318"/>
    <property type="project" value="GO_Central"/>
</dbReference>
<dbReference type="GO" id="GO:0009303">
    <property type="term" value="P:rRNA transcription"/>
    <property type="evidence" value="ECO:0000304"/>
    <property type="project" value="ProtInc"/>
</dbReference>
<dbReference type="GO" id="GO:0006383">
    <property type="term" value="P:transcription by RNA polymerase III"/>
    <property type="evidence" value="ECO:0000305"/>
    <property type="project" value="HGNC-UCL"/>
</dbReference>
<dbReference type="GO" id="GO:0006384">
    <property type="term" value="P:transcription initiation at RNA polymerase III promoter"/>
    <property type="evidence" value="ECO:0000318"/>
    <property type="project" value="GO_Central"/>
</dbReference>
<dbReference type="GO" id="GO:0009304">
    <property type="term" value="P:tRNA transcription"/>
    <property type="evidence" value="ECO:0000304"/>
    <property type="project" value="ProtInc"/>
</dbReference>
<dbReference type="GO" id="GO:0042797">
    <property type="term" value="P:tRNA transcription by RNA polymerase III"/>
    <property type="evidence" value="ECO:0000305"/>
    <property type="project" value="HGNC-UCL"/>
</dbReference>
<dbReference type="CDD" id="cd16169">
    <property type="entry name" value="Tau138_eWH"/>
    <property type="match status" value="1"/>
</dbReference>
<dbReference type="InterPro" id="IPR056467">
    <property type="entry name" value="eWH_GTF3C1"/>
</dbReference>
<dbReference type="InterPro" id="IPR044210">
    <property type="entry name" value="Tfc3-like"/>
</dbReference>
<dbReference type="InterPro" id="IPR035625">
    <property type="entry name" value="Tfc3-like_eWH"/>
</dbReference>
<dbReference type="InterPro" id="IPR007309">
    <property type="entry name" value="TFIIIC_Bblock-bd"/>
</dbReference>
<dbReference type="InterPro" id="IPR056428">
    <property type="entry name" value="WH_GTF3C1"/>
</dbReference>
<dbReference type="PANTHER" id="PTHR15180">
    <property type="entry name" value="GENERAL TRANSCRIPTION FACTOR 3C POLYPEPTIDE 1"/>
    <property type="match status" value="1"/>
</dbReference>
<dbReference type="PANTHER" id="PTHR15180:SF1">
    <property type="entry name" value="GENERAL TRANSCRIPTION FACTOR 3C POLYPEPTIDE 1"/>
    <property type="match status" value="1"/>
</dbReference>
<dbReference type="Pfam" id="PF04182">
    <property type="entry name" value="B-block_TFIIIC"/>
    <property type="match status" value="1"/>
</dbReference>
<dbReference type="Pfam" id="PF24101">
    <property type="entry name" value="eWH_GTF3C1"/>
    <property type="match status" value="1"/>
</dbReference>
<dbReference type="Pfam" id="PF23704">
    <property type="entry name" value="WH_GTF3C1_N"/>
    <property type="match status" value="1"/>
</dbReference>
<gene>
    <name type="primary">GTF3C1</name>
</gene>
<organism>
    <name type="scientific">Homo sapiens</name>
    <name type="common">Human</name>
    <dbReference type="NCBI Taxonomy" id="9606"/>
    <lineage>
        <taxon>Eukaryota</taxon>
        <taxon>Metazoa</taxon>
        <taxon>Chordata</taxon>
        <taxon>Craniata</taxon>
        <taxon>Vertebrata</taxon>
        <taxon>Euteleostomi</taxon>
        <taxon>Mammalia</taxon>
        <taxon>Eutheria</taxon>
        <taxon>Euarchontoglires</taxon>
        <taxon>Primates</taxon>
        <taxon>Haplorrhini</taxon>
        <taxon>Catarrhini</taxon>
        <taxon>Hominidae</taxon>
        <taxon>Homo</taxon>
    </lineage>
</organism>
<accession>Q12789</accession>
<accession>B2RP21</accession>
<accession>Q12838</accession>
<accession>Q6DKN9</accession>
<accession>Q9Y4W9</accession>
<proteinExistence type="evidence at protein level"/>
<keyword id="KW-0002">3D-structure</keyword>
<keyword id="KW-0025">Alternative splicing</keyword>
<keyword id="KW-0903">Direct protein sequencing</keyword>
<keyword id="KW-0238">DNA-binding</keyword>
<keyword id="KW-1017">Isopeptide bond</keyword>
<keyword id="KW-0539">Nucleus</keyword>
<keyword id="KW-0597">Phosphoprotein</keyword>
<keyword id="KW-1267">Proteomics identification</keyword>
<keyword id="KW-1185">Reference proteome</keyword>
<keyword id="KW-0804">Transcription</keyword>
<keyword id="KW-0832">Ubl conjugation</keyword>